<protein>
    <recommendedName>
        <fullName evidence="1">U3 small nucleolar ribonucleoprotein protein imp3</fullName>
        <shortName>U3 snoRNP protein imp3</shortName>
    </recommendedName>
    <alternativeName>
        <fullName>37S ribosomal protein S4-like</fullName>
    </alternativeName>
</protein>
<proteinExistence type="inferred from homology"/>
<reference key="1">
    <citation type="submission" date="1995-06" db="EMBL/GenBank/DDBJ databases">
        <authorList>
            <person name="Garbe T.R."/>
            <person name="Stringer J.R."/>
        </authorList>
    </citation>
    <scope>NUCLEOTIDE SEQUENCE [GENOMIC DNA]</scope>
</reference>
<evidence type="ECO:0000250" key="1">
    <source>
        <dbReference type="UniProtKB" id="P32899"/>
    </source>
</evidence>
<evidence type="ECO:0000255" key="2">
    <source>
        <dbReference type="PROSITE-ProRule" id="PRU00182"/>
    </source>
</evidence>
<evidence type="ECO:0000305" key="3"/>
<comment type="function">
    <text evidence="1">Component of the U3 small nucleolar ribonucleoprotein. Required for the early cleavages at sites A0, A1 and A2 during 18S ribosomal pre-RNA processing (By similarity).</text>
</comment>
<comment type="subunit">
    <text evidence="1">Component of a heterotrimeric complex containing imp3, imp4 and mpp10.</text>
</comment>
<comment type="subcellular location">
    <subcellularLocation>
        <location evidence="1">Nucleus</location>
        <location evidence="1">Nucleolus</location>
    </subcellularLocation>
</comment>
<comment type="similarity">
    <text evidence="3">Belongs to the universal ribosomal protein uS4 family.</text>
</comment>
<feature type="chain" id="PRO_0000132706" description="U3 small nucleolar ribonucleoprotein protein imp3">
    <location>
        <begin position="1"/>
        <end position="169" status="greater than"/>
    </location>
</feature>
<feature type="domain" description="S4 RNA-binding" evidence="2">
    <location>
        <begin position="109"/>
        <end position="166"/>
    </location>
</feature>
<feature type="non-terminal residue">
    <location>
        <position position="169"/>
    </location>
</feature>
<organism>
    <name type="scientific">Pneumocystis carinii</name>
    <dbReference type="NCBI Taxonomy" id="4754"/>
    <lineage>
        <taxon>Eukaryota</taxon>
        <taxon>Fungi</taxon>
        <taxon>Dikarya</taxon>
        <taxon>Ascomycota</taxon>
        <taxon>Taphrinomycotina</taxon>
        <taxon>Pneumocystomycetes</taxon>
        <taxon>Pneumocystaceae</taxon>
        <taxon>Pneumocystis</taxon>
    </lineage>
</organism>
<gene>
    <name type="primary">RBP</name>
</gene>
<accession>Q01688</accession>
<dbReference type="EMBL" id="U17121">
    <property type="protein sequence ID" value="AAA67762.1"/>
    <property type="molecule type" value="Genomic_DNA"/>
</dbReference>
<dbReference type="SMR" id="Q01688"/>
<dbReference type="VEuPathDB" id="FungiDB:T552_01397"/>
<dbReference type="GO" id="GO:0034457">
    <property type="term" value="C:Mpp10 complex"/>
    <property type="evidence" value="ECO:0007669"/>
    <property type="project" value="TreeGrafter"/>
</dbReference>
<dbReference type="GO" id="GO:0032040">
    <property type="term" value="C:small-subunit processome"/>
    <property type="evidence" value="ECO:0007669"/>
    <property type="project" value="TreeGrafter"/>
</dbReference>
<dbReference type="GO" id="GO:0019843">
    <property type="term" value="F:rRNA binding"/>
    <property type="evidence" value="ECO:0007669"/>
    <property type="project" value="UniProtKB-KW"/>
</dbReference>
<dbReference type="GO" id="GO:0030515">
    <property type="term" value="F:snoRNA binding"/>
    <property type="evidence" value="ECO:0007669"/>
    <property type="project" value="TreeGrafter"/>
</dbReference>
<dbReference type="GO" id="GO:0042274">
    <property type="term" value="P:ribosomal small subunit biogenesis"/>
    <property type="evidence" value="ECO:0007669"/>
    <property type="project" value="TreeGrafter"/>
</dbReference>
<dbReference type="GO" id="GO:0006364">
    <property type="term" value="P:rRNA processing"/>
    <property type="evidence" value="ECO:0007669"/>
    <property type="project" value="TreeGrafter"/>
</dbReference>
<dbReference type="CDD" id="cd00165">
    <property type="entry name" value="S4"/>
    <property type="match status" value="1"/>
</dbReference>
<dbReference type="FunFam" id="3.10.290.10:FF:000006">
    <property type="entry name" value="U3 small nucleolar ribonucleoprotein IMP3"/>
    <property type="match status" value="1"/>
</dbReference>
<dbReference type="Gene3D" id="3.10.290.10">
    <property type="entry name" value="RNA-binding S4 domain"/>
    <property type="match status" value="1"/>
</dbReference>
<dbReference type="InterPro" id="IPR022801">
    <property type="entry name" value="Ribosomal_uS4"/>
</dbReference>
<dbReference type="InterPro" id="IPR001912">
    <property type="entry name" value="Ribosomal_uS4_N"/>
</dbReference>
<dbReference type="InterPro" id="IPR002942">
    <property type="entry name" value="S4_RNA-bd"/>
</dbReference>
<dbReference type="InterPro" id="IPR036986">
    <property type="entry name" value="S4_RNA-bd_sf"/>
</dbReference>
<dbReference type="PANTHER" id="PTHR11831">
    <property type="entry name" value="30S 40S RIBOSOMAL PROTEIN"/>
    <property type="match status" value="1"/>
</dbReference>
<dbReference type="PANTHER" id="PTHR11831:SF1">
    <property type="entry name" value="U3 SMALL NUCLEOLAR RIBONUCLEOPROTEIN PROTEIN IMP3"/>
    <property type="match status" value="1"/>
</dbReference>
<dbReference type="Pfam" id="PF00163">
    <property type="entry name" value="Ribosomal_S4"/>
    <property type="match status" value="1"/>
</dbReference>
<dbReference type="Pfam" id="PF01479">
    <property type="entry name" value="S4"/>
    <property type="match status" value="1"/>
</dbReference>
<dbReference type="SMART" id="SM01390">
    <property type="entry name" value="Ribosomal_S4"/>
    <property type="match status" value="1"/>
</dbReference>
<dbReference type="SUPFAM" id="SSF55174">
    <property type="entry name" value="Alpha-L RNA-binding motif"/>
    <property type="match status" value="1"/>
</dbReference>
<dbReference type="PROSITE" id="PS50889">
    <property type="entry name" value="S4"/>
    <property type="match status" value="1"/>
</dbReference>
<name>IMP3_PNECA</name>
<keyword id="KW-0539">Nucleus</keyword>
<keyword id="KW-0687">Ribonucleoprotein</keyword>
<keyword id="KW-0690">Ribosome biogenesis</keyword>
<keyword id="KW-0694">RNA-binding</keyword>
<keyword id="KW-0699">rRNA-binding</keyword>
<sequence length="169" mass="19855">MRKLKYHEKKLLTKHDFLNYKKDDNNHRDVNVIRRYHIPQREDYFKYNQLVGLLLGIANKLSLLEPTDSFGNLHKKMLLGKLFDMALLTSTPKLSDVENKLTVSAFCRRRLPVVMCRLKMCETVSTSVKYVEHGHVRVGPEVITDPAFFVTRNMEDFVTWVDSSKIRRN</sequence>